<geneLocation type="chloroplast"/>
<feature type="chain" id="PRO_0000228956" description="Small ribosomal subunit protein uS4c">
    <location>
        <begin position="1"/>
        <end position="201"/>
    </location>
</feature>
<feature type="domain" description="S4 RNA-binding">
    <location>
        <begin position="89"/>
        <end position="149"/>
    </location>
</feature>
<feature type="region of interest" description="Disordered" evidence="2">
    <location>
        <begin position="17"/>
        <end position="44"/>
    </location>
</feature>
<accession>Q2VEH5</accession>
<accession>Q27S48</accession>
<gene>
    <name type="primary">rps4</name>
</gene>
<protein>
    <recommendedName>
        <fullName evidence="3">Small ribosomal subunit protein uS4c</fullName>
    </recommendedName>
    <alternativeName>
        <fullName>30S ribosomal protein S4, chloroplastic</fullName>
    </alternativeName>
</protein>
<proteinExistence type="inferred from homology"/>
<sequence>MSRYRGPRFKKIRRLGALPGLTNKKPRTGSDLRNQSRSGKKSQYRIRLEEKQKLRFHYGLTERQLLKYVRIARKAKGSTGQVLLQLLEMRLDNILFRLGMASTIPAARQLVNHRHILVNGHIVDIPSYRCKPRDIITAKDEQKSRALIQISLDSSPHEELPNHLTLQPFQYKGLVNQIIDSKWVGLKINELLVVEYYSRQT</sequence>
<reference key="1">
    <citation type="journal article" date="2006" name="Plant Cell Rep.">
        <title>The complete chloroplast genome sequences of Solanum tuberosum and comparative analysis with Solanaceae species identified the presence of a 241-bp deletion in cultivated potato chloroplast DNA sequence.</title>
        <authorList>
            <person name="Chung H.-J."/>
            <person name="Jung J.D."/>
            <person name="Park H.-W."/>
            <person name="Kim J.-H."/>
            <person name="Cha H.W."/>
            <person name="Min S.R."/>
            <person name="Jeong W.-J."/>
            <person name="Liu J.R."/>
        </authorList>
    </citation>
    <scope>NUCLEOTIDE SEQUENCE [LARGE SCALE GENOMIC DNA]</scope>
    <source>
        <strain>cv. Desiree</strain>
    </source>
</reference>
<reference key="2">
    <citation type="submission" date="2006-02" db="EMBL/GenBank/DDBJ databases">
        <title>Complete chloroplast genome sequences of Solanum tuberosum cultivar Desiree and comparative analyses with other Solanaceae genomes.</title>
        <authorList>
            <person name="Gargano D."/>
            <person name="Scotti N."/>
            <person name="Vezzi A."/>
            <person name="Bilardi A."/>
            <person name="Valle G."/>
            <person name="Grillo S."/>
            <person name="Cardi T."/>
        </authorList>
    </citation>
    <scope>NUCLEOTIDE SEQUENCE [LARGE SCALE GENOMIC DNA]</scope>
    <source>
        <strain>cv. Desiree</strain>
    </source>
</reference>
<evidence type="ECO:0000250" key="1"/>
<evidence type="ECO:0000256" key="2">
    <source>
        <dbReference type="SAM" id="MobiDB-lite"/>
    </source>
</evidence>
<evidence type="ECO:0000305" key="3"/>
<dbReference type="EMBL" id="DQ231562">
    <property type="protein sequence ID" value="ABB90043.1"/>
    <property type="molecule type" value="Genomic_DNA"/>
</dbReference>
<dbReference type="EMBL" id="DQ386163">
    <property type="protein sequence ID" value="ABD47059.1"/>
    <property type="molecule type" value="Genomic_DNA"/>
</dbReference>
<dbReference type="RefSeq" id="YP_635641.1">
    <property type="nucleotide sequence ID" value="NC_008096.2"/>
</dbReference>
<dbReference type="SMR" id="Q2VEH5"/>
<dbReference type="FunCoup" id="Q2VEH5">
    <property type="interactions" value="235"/>
</dbReference>
<dbReference type="STRING" id="4113.Q2VEH5"/>
<dbReference type="PaxDb" id="4113-PGSC0003DMT400061778"/>
<dbReference type="GeneID" id="4099972"/>
<dbReference type="KEGG" id="sot:4099972"/>
<dbReference type="eggNOG" id="KOG3301">
    <property type="taxonomic scope" value="Eukaryota"/>
</dbReference>
<dbReference type="InParanoid" id="Q2VEH5"/>
<dbReference type="OrthoDB" id="2443at2759"/>
<dbReference type="Proteomes" id="UP000011115">
    <property type="component" value="Unassembled WGS sequence"/>
</dbReference>
<dbReference type="ExpressionAtlas" id="Q2VEH5">
    <property type="expression patterns" value="baseline"/>
</dbReference>
<dbReference type="GO" id="GO:0009507">
    <property type="term" value="C:chloroplast"/>
    <property type="evidence" value="ECO:0007669"/>
    <property type="project" value="UniProtKB-SubCell"/>
</dbReference>
<dbReference type="GO" id="GO:0015935">
    <property type="term" value="C:small ribosomal subunit"/>
    <property type="evidence" value="ECO:0000318"/>
    <property type="project" value="GO_Central"/>
</dbReference>
<dbReference type="GO" id="GO:0019843">
    <property type="term" value="F:rRNA binding"/>
    <property type="evidence" value="ECO:0000318"/>
    <property type="project" value="GO_Central"/>
</dbReference>
<dbReference type="GO" id="GO:0003735">
    <property type="term" value="F:structural constituent of ribosome"/>
    <property type="evidence" value="ECO:0000318"/>
    <property type="project" value="GO_Central"/>
</dbReference>
<dbReference type="GO" id="GO:0042274">
    <property type="term" value="P:ribosomal small subunit biogenesis"/>
    <property type="evidence" value="ECO:0000318"/>
    <property type="project" value="GO_Central"/>
</dbReference>
<dbReference type="GO" id="GO:0006412">
    <property type="term" value="P:translation"/>
    <property type="evidence" value="ECO:0007669"/>
    <property type="project" value="UniProtKB-UniRule"/>
</dbReference>
<dbReference type="CDD" id="cd00165">
    <property type="entry name" value="S4"/>
    <property type="match status" value="1"/>
</dbReference>
<dbReference type="FunFam" id="1.10.1050.10:FF:000002">
    <property type="entry name" value="30S ribosomal protein S4, chloroplastic"/>
    <property type="match status" value="1"/>
</dbReference>
<dbReference type="FunFam" id="3.10.290.10:FF:000081">
    <property type="entry name" value="30S ribosomal protein S4, chloroplastic"/>
    <property type="match status" value="1"/>
</dbReference>
<dbReference type="Gene3D" id="1.10.1050.10">
    <property type="entry name" value="Ribosomal Protein S4 Delta 41, Chain A, domain 1"/>
    <property type="match status" value="1"/>
</dbReference>
<dbReference type="Gene3D" id="3.10.290.10">
    <property type="entry name" value="RNA-binding S4 domain"/>
    <property type="match status" value="1"/>
</dbReference>
<dbReference type="HAMAP" id="MF_01306_B">
    <property type="entry name" value="Ribosomal_uS4_B"/>
    <property type="match status" value="1"/>
</dbReference>
<dbReference type="InterPro" id="IPR022801">
    <property type="entry name" value="Ribosomal_uS4"/>
</dbReference>
<dbReference type="InterPro" id="IPR005709">
    <property type="entry name" value="Ribosomal_uS4_bac-type"/>
</dbReference>
<dbReference type="InterPro" id="IPR018079">
    <property type="entry name" value="Ribosomal_uS4_CS"/>
</dbReference>
<dbReference type="InterPro" id="IPR001912">
    <property type="entry name" value="Ribosomal_uS4_N"/>
</dbReference>
<dbReference type="InterPro" id="IPR002942">
    <property type="entry name" value="S4_RNA-bd"/>
</dbReference>
<dbReference type="InterPro" id="IPR036986">
    <property type="entry name" value="S4_RNA-bd_sf"/>
</dbReference>
<dbReference type="NCBIfam" id="NF003717">
    <property type="entry name" value="PRK05327.1"/>
    <property type="match status" value="1"/>
</dbReference>
<dbReference type="NCBIfam" id="TIGR01017">
    <property type="entry name" value="rpsD_bact"/>
    <property type="match status" value="1"/>
</dbReference>
<dbReference type="PANTHER" id="PTHR11831">
    <property type="entry name" value="30S 40S RIBOSOMAL PROTEIN"/>
    <property type="match status" value="1"/>
</dbReference>
<dbReference type="PANTHER" id="PTHR11831:SF4">
    <property type="entry name" value="SMALL RIBOSOMAL SUBUNIT PROTEIN US4M"/>
    <property type="match status" value="1"/>
</dbReference>
<dbReference type="Pfam" id="PF00163">
    <property type="entry name" value="Ribosomal_S4"/>
    <property type="match status" value="1"/>
</dbReference>
<dbReference type="Pfam" id="PF01479">
    <property type="entry name" value="S4"/>
    <property type="match status" value="1"/>
</dbReference>
<dbReference type="SMART" id="SM01390">
    <property type="entry name" value="Ribosomal_S4"/>
    <property type="match status" value="1"/>
</dbReference>
<dbReference type="SMART" id="SM00363">
    <property type="entry name" value="S4"/>
    <property type="match status" value="1"/>
</dbReference>
<dbReference type="SUPFAM" id="SSF55174">
    <property type="entry name" value="Alpha-L RNA-binding motif"/>
    <property type="match status" value="1"/>
</dbReference>
<dbReference type="PROSITE" id="PS00632">
    <property type="entry name" value="RIBOSOMAL_S4"/>
    <property type="match status" value="1"/>
</dbReference>
<dbReference type="PROSITE" id="PS50889">
    <property type="entry name" value="S4"/>
    <property type="match status" value="1"/>
</dbReference>
<organism>
    <name type="scientific">Solanum tuberosum</name>
    <name type="common">Potato</name>
    <dbReference type="NCBI Taxonomy" id="4113"/>
    <lineage>
        <taxon>Eukaryota</taxon>
        <taxon>Viridiplantae</taxon>
        <taxon>Streptophyta</taxon>
        <taxon>Embryophyta</taxon>
        <taxon>Tracheophyta</taxon>
        <taxon>Spermatophyta</taxon>
        <taxon>Magnoliopsida</taxon>
        <taxon>eudicotyledons</taxon>
        <taxon>Gunneridae</taxon>
        <taxon>Pentapetalae</taxon>
        <taxon>asterids</taxon>
        <taxon>lamiids</taxon>
        <taxon>Solanales</taxon>
        <taxon>Solanaceae</taxon>
        <taxon>Solanoideae</taxon>
        <taxon>Solaneae</taxon>
        <taxon>Solanum</taxon>
    </lineage>
</organism>
<keyword id="KW-0150">Chloroplast</keyword>
<keyword id="KW-0934">Plastid</keyword>
<keyword id="KW-1185">Reference proteome</keyword>
<keyword id="KW-0687">Ribonucleoprotein</keyword>
<keyword id="KW-0689">Ribosomal protein</keyword>
<keyword id="KW-0694">RNA-binding</keyword>
<keyword id="KW-0699">rRNA-binding</keyword>
<name>RR4_SOLTU</name>
<comment type="function">
    <text evidence="1">One of the primary rRNA binding proteins, it binds directly to 16S rRNA where it nucleates assembly of the body of the 30S subunit.</text>
</comment>
<comment type="function">
    <text evidence="1">With S5 and S12 plays an important role in translational accuracy.</text>
</comment>
<comment type="subunit">
    <text evidence="1">Part of the 30S ribosomal subunit. Contacts protein S5. The interaction surface between S4 and S5 is involved in control of translational fidelity (By similarity).</text>
</comment>
<comment type="subcellular location">
    <subcellularLocation>
        <location>Plastid</location>
        <location>Chloroplast</location>
    </subcellularLocation>
</comment>
<comment type="similarity">
    <text evidence="3">Belongs to the universal ribosomal protein uS4 family.</text>
</comment>